<reference key="1">
    <citation type="journal article" date="2004" name="J. Mol. Microbiol. Biotechnol.">
        <title>The complete genome sequence of Bacillus licheniformis DSM13, an organism with great industrial potential.</title>
        <authorList>
            <person name="Veith B."/>
            <person name="Herzberg C."/>
            <person name="Steckel S."/>
            <person name="Feesche J."/>
            <person name="Maurer K.H."/>
            <person name="Ehrenreich P."/>
            <person name="Baeumer S."/>
            <person name="Henne A."/>
            <person name="Liesegang H."/>
            <person name="Merkl R."/>
            <person name="Ehrenreich A."/>
            <person name="Gottschalk G."/>
        </authorList>
    </citation>
    <scope>NUCLEOTIDE SEQUENCE [LARGE SCALE GENOMIC DNA]</scope>
    <source>
        <strain>ATCC 14580 / DSM 13 / JCM 2505 / CCUG 7422 / NBRC 12200 / NCIMB 9375 / NCTC 10341 / NRRL NRS-1264 / Gibson 46</strain>
    </source>
</reference>
<reference key="2">
    <citation type="journal article" date="2004" name="Genome Biol.">
        <title>Complete genome sequence of the industrial bacterium Bacillus licheniformis and comparisons with closely related Bacillus species.</title>
        <authorList>
            <person name="Rey M.W."/>
            <person name="Ramaiya P."/>
            <person name="Nelson B.A."/>
            <person name="Brody-Karpin S.D."/>
            <person name="Zaretsky E.J."/>
            <person name="Tang M."/>
            <person name="Lopez de Leon A."/>
            <person name="Xiang H."/>
            <person name="Gusti V."/>
            <person name="Clausen I.G."/>
            <person name="Olsen P.B."/>
            <person name="Rasmussen M.D."/>
            <person name="Andersen J.T."/>
            <person name="Joergensen P.L."/>
            <person name="Larsen T.S."/>
            <person name="Sorokin A."/>
            <person name="Bolotin A."/>
            <person name="Lapidus A."/>
            <person name="Galleron N."/>
            <person name="Ehrlich S.D."/>
            <person name="Berka R.M."/>
        </authorList>
    </citation>
    <scope>NUCLEOTIDE SEQUENCE [LARGE SCALE GENOMIC DNA]</scope>
    <source>
        <strain>ATCC 14580 / DSM 13 / JCM 2505 / CCUG 7422 / NBRC 12200 / NCIMB 9375 / NCTC 10341 / NRRL NRS-1264 / Gibson 46</strain>
    </source>
</reference>
<proteinExistence type="inferred from homology"/>
<organism>
    <name type="scientific">Bacillus licheniformis (strain ATCC 14580 / DSM 13 / JCM 2505 / CCUG 7422 / NBRC 12200 / NCIMB 9375 / NCTC 10341 / NRRL NRS-1264 / Gibson 46)</name>
    <dbReference type="NCBI Taxonomy" id="279010"/>
    <lineage>
        <taxon>Bacteria</taxon>
        <taxon>Bacillati</taxon>
        <taxon>Bacillota</taxon>
        <taxon>Bacilli</taxon>
        <taxon>Bacillales</taxon>
        <taxon>Bacillaceae</taxon>
        <taxon>Bacillus</taxon>
    </lineage>
</organism>
<name>ADDB_BACLD</name>
<dbReference type="EC" id="3.1.-.-" evidence="1"/>
<dbReference type="EMBL" id="CP000002">
    <property type="protein sequence ID" value="AAU22717.1"/>
    <property type="molecule type" value="Genomic_DNA"/>
</dbReference>
<dbReference type="EMBL" id="AE017333">
    <property type="protein sequence ID" value="AAU40064.1"/>
    <property type="molecule type" value="Genomic_DNA"/>
</dbReference>
<dbReference type="RefSeq" id="WP_009328899.1">
    <property type="nucleotide sequence ID" value="NC_006322.1"/>
</dbReference>
<dbReference type="SMR" id="Q65LK0"/>
<dbReference type="STRING" id="279010.BL01351"/>
<dbReference type="GeneID" id="92862262"/>
<dbReference type="KEGG" id="bld:BLi01156"/>
<dbReference type="KEGG" id="bli:BL01351"/>
<dbReference type="eggNOG" id="COG3857">
    <property type="taxonomic scope" value="Bacteria"/>
</dbReference>
<dbReference type="HOGENOM" id="CLU_007838_0_0_9"/>
<dbReference type="Proteomes" id="UP000000606">
    <property type="component" value="Chromosome"/>
</dbReference>
<dbReference type="GO" id="GO:0051539">
    <property type="term" value="F:4 iron, 4 sulfur cluster binding"/>
    <property type="evidence" value="ECO:0007669"/>
    <property type="project" value="UniProtKB-KW"/>
</dbReference>
<dbReference type="GO" id="GO:0008409">
    <property type="term" value="F:5'-3' exonuclease activity"/>
    <property type="evidence" value="ECO:0007669"/>
    <property type="project" value="UniProtKB-UniRule"/>
</dbReference>
<dbReference type="GO" id="GO:0005524">
    <property type="term" value="F:ATP binding"/>
    <property type="evidence" value="ECO:0007669"/>
    <property type="project" value="UniProtKB-UniRule"/>
</dbReference>
<dbReference type="GO" id="GO:0003690">
    <property type="term" value="F:double-stranded DNA binding"/>
    <property type="evidence" value="ECO:0007669"/>
    <property type="project" value="UniProtKB-UniRule"/>
</dbReference>
<dbReference type="GO" id="GO:0004386">
    <property type="term" value="F:helicase activity"/>
    <property type="evidence" value="ECO:0007669"/>
    <property type="project" value="UniProtKB-KW"/>
</dbReference>
<dbReference type="GO" id="GO:0046872">
    <property type="term" value="F:metal ion binding"/>
    <property type="evidence" value="ECO:0007669"/>
    <property type="project" value="UniProtKB-KW"/>
</dbReference>
<dbReference type="GO" id="GO:0000724">
    <property type="term" value="P:double-strand break repair via homologous recombination"/>
    <property type="evidence" value="ECO:0007669"/>
    <property type="project" value="UniProtKB-UniRule"/>
</dbReference>
<dbReference type="FunFam" id="3.90.320.10:FF:000006">
    <property type="entry name" value="ATP-dependent helicase/deoxyribonuclease subunit B"/>
    <property type="match status" value="1"/>
</dbReference>
<dbReference type="Gene3D" id="3.90.320.10">
    <property type="match status" value="1"/>
</dbReference>
<dbReference type="Gene3D" id="6.10.140.1030">
    <property type="match status" value="1"/>
</dbReference>
<dbReference type="Gene3D" id="3.40.50.300">
    <property type="entry name" value="P-loop containing nucleotide triphosphate hydrolases"/>
    <property type="match status" value="4"/>
</dbReference>
<dbReference type="HAMAP" id="MF_01452">
    <property type="entry name" value="AddB_type1"/>
    <property type="match status" value="1"/>
</dbReference>
<dbReference type="InterPro" id="IPR049035">
    <property type="entry name" value="ADDB_N"/>
</dbReference>
<dbReference type="InterPro" id="IPR014140">
    <property type="entry name" value="DNA_helicase_suAddB"/>
</dbReference>
<dbReference type="InterPro" id="IPR014017">
    <property type="entry name" value="DNA_helicase_UvrD-like_C"/>
</dbReference>
<dbReference type="InterPro" id="IPR027417">
    <property type="entry name" value="P-loop_NTPase"/>
</dbReference>
<dbReference type="InterPro" id="IPR011604">
    <property type="entry name" value="PDDEXK-like_dom_sf"/>
</dbReference>
<dbReference type="InterPro" id="IPR038726">
    <property type="entry name" value="PDDEXK_AddAB-type"/>
</dbReference>
<dbReference type="NCBIfam" id="TIGR02773">
    <property type="entry name" value="addB_Gpos"/>
    <property type="match status" value="1"/>
</dbReference>
<dbReference type="PANTHER" id="PTHR30591">
    <property type="entry name" value="RECBCD ENZYME SUBUNIT RECC"/>
    <property type="match status" value="1"/>
</dbReference>
<dbReference type="PANTHER" id="PTHR30591:SF1">
    <property type="entry name" value="RECBCD ENZYME SUBUNIT RECC"/>
    <property type="match status" value="1"/>
</dbReference>
<dbReference type="Pfam" id="PF21445">
    <property type="entry name" value="ADDB_N"/>
    <property type="match status" value="1"/>
</dbReference>
<dbReference type="Pfam" id="PF12705">
    <property type="entry name" value="PDDEXK_1"/>
    <property type="match status" value="1"/>
</dbReference>
<dbReference type="SUPFAM" id="SSF52540">
    <property type="entry name" value="P-loop containing nucleoside triphosphate hydrolases"/>
    <property type="match status" value="1"/>
</dbReference>
<dbReference type="PROSITE" id="PS51198">
    <property type="entry name" value="UVRD_HELICASE_ATP_BIND"/>
    <property type="match status" value="1"/>
</dbReference>
<dbReference type="PROSITE" id="PS51217">
    <property type="entry name" value="UVRD_HELICASE_CTER"/>
    <property type="match status" value="1"/>
</dbReference>
<gene>
    <name evidence="1" type="primary">addB</name>
    <name type="ordered locus">BLi01156</name>
    <name type="ordered locus">BL01351</name>
</gene>
<evidence type="ECO:0000255" key="1">
    <source>
        <dbReference type="HAMAP-Rule" id="MF_01452"/>
    </source>
</evidence>
<accession>Q65LK0</accession>
<accession>Q62WZ1</accession>
<feature type="chain" id="PRO_0000379162" description="ATP-dependent helicase/deoxyribonuclease subunit B">
    <location>
        <begin position="1"/>
        <end position="1166"/>
    </location>
</feature>
<feature type="domain" description="UvrD-like helicase ATP-binding" evidence="1">
    <location>
        <begin position="1"/>
        <end position="285"/>
    </location>
</feature>
<feature type="domain" description="UvrD-like helicase C-terminal" evidence="1">
    <location>
        <begin position="279"/>
        <end position="586"/>
    </location>
</feature>
<feature type="binding site" evidence="1">
    <location>
        <begin position="8"/>
        <end position="15"/>
    </location>
    <ligand>
        <name>ATP</name>
        <dbReference type="ChEBI" id="CHEBI:30616"/>
    </ligand>
</feature>
<feature type="binding site" evidence="1">
    <location>
        <position position="801"/>
    </location>
    <ligand>
        <name>[4Fe-4S] cluster</name>
        <dbReference type="ChEBI" id="CHEBI:49883"/>
    </ligand>
</feature>
<feature type="binding site" evidence="1">
    <location>
        <position position="1121"/>
    </location>
    <ligand>
        <name>[4Fe-4S] cluster</name>
        <dbReference type="ChEBI" id="CHEBI:49883"/>
    </ligand>
</feature>
<feature type="binding site" evidence="1">
    <location>
        <position position="1124"/>
    </location>
    <ligand>
        <name>[4Fe-4S] cluster</name>
        <dbReference type="ChEBI" id="CHEBI:49883"/>
    </ligand>
</feature>
<feature type="binding site" evidence="1">
    <location>
        <position position="1130"/>
    </location>
    <ligand>
        <name>[4Fe-4S] cluster</name>
        <dbReference type="ChEBI" id="CHEBI:49883"/>
    </ligand>
</feature>
<comment type="function">
    <text evidence="1">The heterodimer acts as both an ATP-dependent DNA helicase and an ATP-dependent, dual-direction single-stranded exonuclease. Recognizes the chi site generating a DNA molecule suitable for the initiation of homologous recombination. The AddB subunit has 5' -&gt; 3' nuclease activity but not helicase activity.</text>
</comment>
<comment type="cofactor">
    <cofactor evidence="1">
        <name>Mg(2+)</name>
        <dbReference type="ChEBI" id="CHEBI:18420"/>
    </cofactor>
</comment>
<comment type="cofactor">
    <cofactor evidence="1">
        <name>[4Fe-4S] cluster</name>
        <dbReference type="ChEBI" id="CHEBI:49883"/>
    </cofactor>
    <text evidence="1">Binds 1 [4Fe-4S] cluster.</text>
</comment>
<comment type="subunit">
    <text evidence="1">Heterodimer of AddA and AddB.</text>
</comment>
<comment type="miscellaneous">
    <text evidence="1">Despite having conserved helicase domains, this subunit does not have helicase activity.</text>
</comment>
<comment type="similarity">
    <text evidence="1">Belongs to the helicase family. AddB/RexB type 1 subfamily.</text>
</comment>
<keyword id="KW-0004">4Fe-4S</keyword>
<keyword id="KW-0067">ATP-binding</keyword>
<keyword id="KW-0227">DNA damage</keyword>
<keyword id="KW-0234">DNA repair</keyword>
<keyword id="KW-0238">DNA-binding</keyword>
<keyword id="KW-0269">Exonuclease</keyword>
<keyword id="KW-0347">Helicase</keyword>
<keyword id="KW-0378">Hydrolase</keyword>
<keyword id="KW-0408">Iron</keyword>
<keyword id="KW-0411">Iron-sulfur</keyword>
<keyword id="KW-0479">Metal-binding</keyword>
<keyword id="KW-0540">Nuclease</keyword>
<keyword id="KW-0547">Nucleotide-binding</keyword>
<keyword id="KW-1185">Reference proteome</keyword>
<sequence length="1166" mass="134408">MGAVFLSGRSGSGKTTFILNEIREKLRDEPLGKPIIFLVPDQMTFLMEYELSKTPDLGGTIRAQVYSFSRLAWRVLQHTGGMNRPFLTGTGIQMLLRRLIEEHKGEFKVYQNASDKSGFTEQVERMLTEFKRHCLPPQSIRDMMEGTGKSEYEDERILSDKLHDLYILYSKLEENLENQYVQSEDYLTLLAEQIPYAEEIRNAAVYVDGFHQFTPQEMSVLEQLMVHAEEITFSLTADKPFTANSPNDLHLFRMTGKAYYDLYQKAKELGLDPSEVRLEETKRHRHHPELQHLERYFDERPAKPYPGQTESLRIMQASNRRTEIEGIAREIHSLIRQGRFRLRDIAVIARNVEDYKDTIKEVFKDCELPFFIDGKESMQNHPLIELIRSTLDIIKGNWRYEAVFRCVKTELLFPEGQPKERLREQIDQLENYCIAYGIKGDRWTSKDPFVYRRYASLDEDFAKTDKEIETENMLNELKGWIVPPIHRLQKRLKKAETVREMAEAVYLYLEEADVPMKLEQERRLAEEGGRIAESRQHEQVWDAVIQLLDEFVEMMGTERISFALFQQMIETGLESLKFALIPPALDQVFIGNMDLSRMYGTKCTFLIGVNDGILPARPADDGVLSDEDREWLKRNGAQLAATGREQLLDENFLIYMTLSSPSEKLYVSYPIADSEGKTLLPSTVVKRLNELFPDSEEKMLIHEPEQLDDEAQLEFLVNKGIALSHLAGQLGIWTRQYAISDVWWSTYNFLMNEPDRIFSQNILSSLFFRNKVENLNRHVSRDLYGEHIQGSVSRMETFKACPFSHFASHGLKLKERQFFKLEAPDIGQLFHSALKLISDRLHELKLDWRDLTKAQCETLSSDAVERLAPKLQKEILLSSNRHHYVKQKLQKIIARVSGILSEHAKASGFAPVGIELGFGGKGPLPPMRFTLKNGCTMELVGRIDRVDKAESSKGLLLRIVDYKSSDKGLDLAEVYYGLALQMLTYLDLSITHSTDWLGMKASPAGVLYFHVHDPMIQASVPLGLDEIEKEIFKKFKMKGLLLGDQEAVKLMDTTLEQGRSNIISAGLKKDGSLRSDSDVVAEEDFHVLRRHIRRTFQQAGEEITDGKVSIEPYKLKDRTPCTYCSYRSFCQFDESLEENEYRILKPEKDSVILERLKKEDEADGDF</sequence>
<protein>
    <recommendedName>
        <fullName evidence="1">ATP-dependent helicase/deoxyribonuclease subunit B</fullName>
        <ecNumber evidence="1">3.1.-.-</ecNumber>
    </recommendedName>
    <alternativeName>
        <fullName evidence="1">ATP-dependent helicase/nuclease subunit AddB</fullName>
    </alternativeName>
</protein>